<protein>
    <recommendedName>
        <fullName>Peptide-N4-(N-acetyl-beta-glucosaminyl)asparagine amidase A</fullName>
        <shortName>PNGase A</shortName>
        <ecNumber>3.5.1.52</ecNumber>
    </recommendedName>
    <alternativeName>
        <fullName>Glycopeptide N-glycosidase</fullName>
    </alternativeName>
    <alternativeName>
        <fullName>N-glycanase</fullName>
    </alternativeName>
    <component>
        <recommendedName>
            <fullName>Peptide-N4-(N-acetyl-beta-glucosaminyl)asparagine amidase A light chain</fullName>
        </recommendedName>
        <alternativeName>
            <fullName>PNGase A small chain</fullName>
        </alternativeName>
        <alternativeName>
            <fullName>PNGase A subunit B</fullName>
        </alternativeName>
    </component>
    <component>
        <recommendedName>
            <fullName>Peptide-N4-(N-acetyl-beta-glucosaminyl)asparagine amidase A heavy chain</fullName>
        </recommendedName>
        <alternativeName>
            <fullName>PNGase A large chain</fullName>
            <shortName>PNGase A subunit A</shortName>
        </alternativeName>
    </component>
</protein>
<evidence type="ECO:0000255" key="1"/>
<evidence type="ECO:0000269" key="2">
    <source>
    </source>
</evidence>
<feature type="chain" id="PRO_0000022075" description="Peptide-N4-(N-acetyl-beta-glucosaminyl)asparagine amidase A light chain">
    <location>
        <begin position="1"/>
        <end status="unknown"/>
    </location>
</feature>
<feature type="chain" id="PRO_0000022076" description="Peptide-N4-(N-acetyl-beta-glucosaminyl)asparagine amidase A heavy chain">
    <location>
        <begin position="165"/>
        <end position="571"/>
    </location>
</feature>
<feature type="glycosylation site" description="N-linked (GlcNAc...) asparagine" evidence="1">
    <location>
        <position position="121"/>
    </location>
</feature>
<feature type="glycosylation site" description="N-linked (GlcNAc...) asparagine" evidence="1">
    <location>
        <position position="143"/>
    </location>
</feature>
<feature type="glycosylation site" description="N-linked (GlcNAc...) asparagine" evidence="1">
    <location>
        <position position="197"/>
    </location>
</feature>
<feature type="glycosylation site" description="N-linked (GlcNAc...) asparagine" evidence="1">
    <location>
        <position position="241"/>
    </location>
</feature>
<feature type="glycosylation site" description="N-linked (GlcNAc...) asparagine" evidence="1">
    <location>
        <position position="318"/>
    </location>
</feature>
<feature type="glycosylation site" description="N-linked (GlcNAc...) asparagine" evidence="1">
    <location>
        <position position="367"/>
    </location>
</feature>
<feature type="glycosylation site" description="N-linked (GlcNAc...) asparagine" evidence="1">
    <location>
        <position position="390"/>
    </location>
</feature>
<feature type="glycosylation site" description="N-linked (GlcNAc...) asparagine" evidence="1">
    <location>
        <position position="423"/>
    </location>
</feature>
<feature type="glycosylation site" description="N-linked (GlcNAc...) asparagine" evidence="1">
    <location>
        <position position="457"/>
    </location>
</feature>
<feature type="glycosylation site" description="N-linked (GlcNAc...) asparagine" evidence="1">
    <location>
        <position position="481"/>
    </location>
</feature>
<feature type="glycosylation site" description="N-linked (GlcNAc...) asparagine" evidence="1">
    <location>
        <position position="524"/>
    </location>
</feature>
<feature type="glycosylation site" description="N-linked (GlcNAc...) asparagine" evidence="1">
    <location>
        <position position="529"/>
    </location>
</feature>
<feature type="unsure residue" description="P or S">
    <location>
        <position position="27"/>
    </location>
</feature>
<feature type="unsure residue" description="R or G">
    <location>
        <position position="74"/>
    </location>
</feature>
<feature type="unsure residue" description="K or E">
    <location>
        <position position="152"/>
    </location>
</feature>
<feature type="unsure residue" description="I or V">
    <location>
        <position position="179"/>
    </location>
</feature>
<feature type="unsure residue" description="R or Q">
    <location>
        <position position="488"/>
    </location>
</feature>
<feature type="unsure residue" description="E or G">
    <location>
        <position position="506"/>
    </location>
</feature>
<feature type="unsure residue" description="I or V">
    <location>
        <position position="511"/>
    </location>
</feature>
<name>PNAA_PRUDU</name>
<sequence>EPTPLHDTPPTVFFEVTKPIEVPKTKPCSQLILQHDFAYTYGQAPVFANYTPPSDCPSQTFSTIVLEWKATCRRRQFDRIFGVWLGGVEILRSCTAEPRPNGIVWTVEKDITRYYSLLKSNQTLAVYLGNLIDKTYTGIYHVNISLHFYPAKEKLNSFQQKLDNLASGYHSWADLILPISRNLPLNDGLWFEVQNSNDTELKEFKIPQNAYRAVLEVYVSFHENDEFWYSNLPNEYIAANNLSGTPGNGPFREVVVSLDGEVVGAVWPFTVIFTGGINPLLWRPITAIGSFDLPTYDIEITPFLGKILDGKSHKFGFNVTNALNVWYVDANLHLWLDKQSTKTEGKLSKHSSLPLVVSLVSDFKGLNGTFLTRTSRSVSSTGWVKSSYGNITTRSIQDFYYSNSMVLGKDGNMQIVNQKIIFNDSVYINLPSSYVHSLTSHKTFPLYLYTDFLGQGNGTYLLITNVDLGFIEKKSGLGFSNSSLRNLRSAEGNMVVKNNLVVSGLESTQQIYRYDGGKFCYFRNISSSNYTILYDKVGSKCNKKSLSNLDFVLSRLWPFGARMNFAGLRFT</sequence>
<reference key="1">
    <citation type="patent" date="1998-01-20" number="US5710016">
        <title>Almond N-glycosidase gene.</title>
        <authorList>
            <person name="Hiroyuki I."/>
            <person name="Masanori M."/>
            <person name="Ikunoshin K."/>
        </authorList>
    </citation>
    <scope>NUCLEOTIDE SEQUENCE</scope>
    <scope>PROTEIN SEQUENCE OF 1-20; 165-184; 315-338; 365-384; 386-409; 420-441; 443-463; 475-496 AND 498-536</scope>
    <source>
        <tissue>Fruit</tissue>
    </source>
</reference>
<reference key="2">
    <citation type="journal article" date="1998" name="Eur. J. Biochem.">
        <title>Characterisation of peptide-N4-(N-acetyl-beta-glucosaminyl)asparagine amidase A and its N-glycans.</title>
        <authorList>
            <person name="Altmann F."/>
            <person name="Paschinger K."/>
            <person name="Dalik T."/>
            <person name="Vorauer K."/>
        </authorList>
    </citation>
    <scope>PROTEIN SEQUENCE OF 1-10 AND 165-175</scope>
    <scope>SUBUNIT</scope>
    <scope>MASS SPECTROMETRY</scope>
</reference>
<accession>P81898</accession>
<accession>P81899</accession>
<keyword id="KW-0903">Direct protein sequencing</keyword>
<keyword id="KW-0325">Glycoprotein</keyword>
<keyword id="KW-0378">Hydrolase</keyword>
<organism>
    <name type="scientific">Prunus dulcis</name>
    <name type="common">Almond</name>
    <name type="synonym">Amygdalus dulcis</name>
    <dbReference type="NCBI Taxonomy" id="3755"/>
    <lineage>
        <taxon>Eukaryota</taxon>
        <taxon>Viridiplantae</taxon>
        <taxon>Streptophyta</taxon>
        <taxon>Embryophyta</taxon>
        <taxon>Tracheophyta</taxon>
        <taxon>Spermatophyta</taxon>
        <taxon>Magnoliopsida</taxon>
        <taxon>eudicotyledons</taxon>
        <taxon>Gunneridae</taxon>
        <taxon>Pentapetalae</taxon>
        <taxon>rosids</taxon>
        <taxon>fabids</taxon>
        <taxon>Rosales</taxon>
        <taxon>Rosaceae</taxon>
        <taxon>Amygdaloideae</taxon>
        <taxon>Amygdaleae</taxon>
        <taxon>Prunus</taxon>
    </lineage>
</organism>
<dbReference type="EC" id="3.5.1.52"/>
<dbReference type="PIR" id="A59272">
    <property type="entry name" value="A59272"/>
</dbReference>
<dbReference type="PIR" id="B59272">
    <property type="entry name" value="B59272"/>
</dbReference>
<dbReference type="BRENDA" id="3.5.1.52">
    <property type="organism ID" value="5059"/>
</dbReference>
<dbReference type="GO" id="GO:0000224">
    <property type="term" value="F:peptide-N4-(N-acetyl-beta-glucosaminyl)asparagine amidase activity"/>
    <property type="evidence" value="ECO:0007669"/>
    <property type="project" value="UniProtKB-EC"/>
</dbReference>
<dbReference type="InterPro" id="IPR021102">
    <property type="entry name" value="PNGase_A"/>
</dbReference>
<dbReference type="InterPro" id="IPR056948">
    <property type="entry name" value="PNGaseA_N"/>
</dbReference>
<dbReference type="PANTHER" id="PTHR31104">
    <property type="entry name" value="PEPTIDE-N4-(N-ACETYL-BETA-GLUCOSAMINYL)ASPARAGINE AMIDASE A PROTEIN"/>
    <property type="match status" value="1"/>
</dbReference>
<dbReference type="Pfam" id="PF25156">
    <property type="entry name" value="PNGase_A_C"/>
    <property type="match status" value="1"/>
</dbReference>
<dbReference type="Pfam" id="PF12222">
    <property type="entry name" value="PNGaseA"/>
    <property type="match status" value="1"/>
</dbReference>
<proteinExistence type="evidence at protein level"/>
<comment type="catalytic activity">
    <reaction>
        <text>Hydrolysis of an N(4)-(acetyl-beta-D-glucosaminyl)asparagine residue in which the glucosamine residue may be further glycosylated, to yield a (substituted) N-acetyl-beta-D-glucosaminylamine and a peptide containing an aspartate residue.</text>
        <dbReference type="EC" id="3.5.1.52"/>
    </reaction>
</comment>
<comment type="subunit">
    <text evidence="2">Heterodimer of a large and a small chain.</text>
</comment>
<comment type="PTM">
    <text>Is highly glycosylated and is largly resistant against self-deglycosylation.</text>
</comment>
<comment type="mass spectrometry">
    <molecule>Peptide-N4-(N-acetyl-beta-glucosaminyl)asparagine amidase A light chain</molecule>
</comment>
<comment type="mass spectrometry">
    <text>The measured range is 165-?.</text>
</comment>